<feature type="chain" id="PRO_0000249434" description="Transmembrane and coiled-coil domain-containing protein 2">
    <location>
        <begin position="1"/>
        <end position="182"/>
    </location>
</feature>
<feature type="transmembrane region" description="Helical" evidence="1">
    <location>
        <begin position="10"/>
        <end position="30"/>
    </location>
</feature>
<feature type="transmembrane region" description="Helical" evidence="1">
    <location>
        <begin position="50"/>
        <end position="70"/>
    </location>
</feature>
<feature type="coiled-coil region" evidence="1">
    <location>
        <begin position="122"/>
        <end position="149"/>
    </location>
</feature>
<protein>
    <recommendedName>
        <fullName>Transmembrane and coiled-coil domain-containing protein 2</fullName>
    </recommendedName>
</protein>
<sequence>MSSSSSIWDIIIDYLSLSSIWNYLQATLLGETSVPQQTNLGPLDNLAPAVQVILGISFLILLGVGMYALWKRSVQSIQKILLFAITLYKLYKKGSDFFQALLVNPEGSDLTLQDNNIFLSLGLQEKILKKLQTVENKVKDLEGMIISQKPTTKREYSSDHYCSCSDCQSPLPTSGFTSTSEM</sequence>
<accession>Q2NKV5</accession>
<gene>
    <name type="primary">TMCO2</name>
</gene>
<comment type="subcellular location">
    <subcellularLocation>
        <location evidence="2">Membrane</location>
        <topology evidence="2">Multi-pass membrane protein</topology>
    </subcellularLocation>
</comment>
<reference key="1">
    <citation type="submission" date="2006-01" db="EMBL/GenBank/DDBJ databases">
        <authorList>
            <consortium name="NIH - Mammalian Gene Collection (MGC) project"/>
        </authorList>
    </citation>
    <scope>NUCLEOTIDE SEQUENCE [LARGE SCALE MRNA]</scope>
    <source>
        <strain>Hereford</strain>
        <tissue>Testis</tissue>
    </source>
</reference>
<proteinExistence type="evidence at transcript level"/>
<evidence type="ECO:0000255" key="1"/>
<evidence type="ECO:0000305" key="2"/>
<name>TMCO2_BOVIN</name>
<dbReference type="EMBL" id="BC111617">
    <property type="protein sequence ID" value="AAI11618.1"/>
    <property type="molecule type" value="mRNA"/>
</dbReference>
<dbReference type="RefSeq" id="NP_001070545.1">
    <property type="nucleotide sequence ID" value="NM_001077077.2"/>
</dbReference>
<dbReference type="FunCoup" id="Q2NKV5">
    <property type="interactions" value="84"/>
</dbReference>
<dbReference type="STRING" id="9913.ENSBTAP00000026255"/>
<dbReference type="PaxDb" id="9913-ENSBTAP00000026255"/>
<dbReference type="Ensembl" id="ENSBTAT00000026255.4">
    <property type="protein sequence ID" value="ENSBTAP00000026255.3"/>
    <property type="gene ID" value="ENSBTAG00000019698.4"/>
</dbReference>
<dbReference type="GeneID" id="768018"/>
<dbReference type="KEGG" id="bta:768018"/>
<dbReference type="CTD" id="127391"/>
<dbReference type="VEuPathDB" id="HostDB:ENSBTAG00000019698"/>
<dbReference type="VGNC" id="VGNC:35929">
    <property type="gene designation" value="TMCO2"/>
</dbReference>
<dbReference type="eggNOG" id="ENOG502RR64">
    <property type="taxonomic scope" value="Eukaryota"/>
</dbReference>
<dbReference type="GeneTree" id="ENSGT00390000001528"/>
<dbReference type="HOGENOM" id="CLU_1598229_0_0_1"/>
<dbReference type="InParanoid" id="Q2NKV5"/>
<dbReference type="OMA" id="WNWLQAT"/>
<dbReference type="OrthoDB" id="9450048at2759"/>
<dbReference type="TreeFam" id="TF337575"/>
<dbReference type="Proteomes" id="UP000009136">
    <property type="component" value="Chromosome 3"/>
</dbReference>
<dbReference type="Bgee" id="ENSBTAG00000019698">
    <property type="expression patterns" value="Expressed in semen and 95 other cell types or tissues"/>
</dbReference>
<dbReference type="GO" id="GO:0016020">
    <property type="term" value="C:membrane"/>
    <property type="evidence" value="ECO:0007669"/>
    <property type="project" value="UniProtKB-SubCell"/>
</dbReference>
<dbReference type="InterPro" id="IPR031697">
    <property type="entry name" value="TMCCDC2"/>
</dbReference>
<dbReference type="PANTHER" id="PTHR38496">
    <property type="entry name" value="TRANSMEMBRANE AND COILED-COIL DOMAIN-CONTAINING PROTEIN 2"/>
    <property type="match status" value="1"/>
</dbReference>
<dbReference type="PANTHER" id="PTHR38496:SF1">
    <property type="entry name" value="TRANSMEMBRANE AND COILED-COIL DOMAIN-CONTAINING PROTEIN 2"/>
    <property type="match status" value="1"/>
</dbReference>
<dbReference type="Pfam" id="PF15844">
    <property type="entry name" value="TMCCDC2"/>
    <property type="match status" value="1"/>
</dbReference>
<organism>
    <name type="scientific">Bos taurus</name>
    <name type="common">Bovine</name>
    <dbReference type="NCBI Taxonomy" id="9913"/>
    <lineage>
        <taxon>Eukaryota</taxon>
        <taxon>Metazoa</taxon>
        <taxon>Chordata</taxon>
        <taxon>Craniata</taxon>
        <taxon>Vertebrata</taxon>
        <taxon>Euteleostomi</taxon>
        <taxon>Mammalia</taxon>
        <taxon>Eutheria</taxon>
        <taxon>Laurasiatheria</taxon>
        <taxon>Artiodactyla</taxon>
        <taxon>Ruminantia</taxon>
        <taxon>Pecora</taxon>
        <taxon>Bovidae</taxon>
        <taxon>Bovinae</taxon>
        <taxon>Bos</taxon>
    </lineage>
</organism>
<keyword id="KW-0175">Coiled coil</keyword>
<keyword id="KW-0472">Membrane</keyword>
<keyword id="KW-1185">Reference proteome</keyword>
<keyword id="KW-0812">Transmembrane</keyword>
<keyword id="KW-1133">Transmembrane helix</keyword>